<name>FETP_STUS1</name>
<keyword id="KW-0408">Iron</keyword>
<keyword id="KW-1185">Reference proteome</keyword>
<comment type="function">
    <text evidence="1">Could be a mediator in iron transactions between iron acquisition and iron-requiring processes, such as synthesis and/or repair of Fe-S clusters in biosynthetic enzymes.</text>
</comment>
<comment type="similarity">
    <text evidence="1">Belongs to the Fe(2+)-trafficking protein family.</text>
</comment>
<evidence type="ECO:0000255" key="1">
    <source>
        <dbReference type="HAMAP-Rule" id="MF_00686"/>
    </source>
</evidence>
<dbReference type="EMBL" id="CP000304">
    <property type="protein sequence ID" value="ABP81721.1"/>
    <property type="molecule type" value="Genomic_DNA"/>
</dbReference>
<dbReference type="RefSeq" id="WP_011915101.1">
    <property type="nucleotide sequence ID" value="NC_009434.1"/>
</dbReference>
<dbReference type="SMR" id="A4VRX0"/>
<dbReference type="KEGG" id="psa:PST_4098"/>
<dbReference type="eggNOG" id="COG2924">
    <property type="taxonomic scope" value="Bacteria"/>
</dbReference>
<dbReference type="HOGENOM" id="CLU_170994_0_0_6"/>
<dbReference type="Proteomes" id="UP000000233">
    <property type="component" value="Chromosome"/>
</dbReference>
<dbReference type="GO" id="GO:0005829">
    <property type="term" value="C:cytosol"/>
    <property type="evidence" value="ECO:0007669"/>
    <property type="project" value="TreeGrafter"/>
</dbReference>
<dbReference type="GO" id="GO:0005506">
    <property type="term" value="F:iron ion binding"/>
    <property type="evidence" value="ECO:0007669"/>
    <property type="project" value="UniProtKB-UniRule"/>
</dbReference>
<dbReference type="GO" id="GO:0034599">
    <property type="term" value="P:cellular response to oxidative stress"/>
    <property type="evidence" value="ECO:0007669"/>
    <property type="project" value="TreeGrafter"/>
</dbReference>
<dbReference type="FunFam" id="1.10.3880.10:FF:000001">
    <property type="entry name" value="Probable Fe(2+)-trafficking protein"/>
    <property type="match status" value="1"/>
</dbReference>
<dbReference type="Gene3D" id="1.10.3880.10">
    <property type="entry name" value="Fe(II) trafficking protein YggX"/>
    <property type="match status" value="1"/>
</dbReference>
<dbReference type="HAMAP" id="MF_00686">
    <property type="entry name" value="Fe_traffic_YggX"/>
    <property type="match status" value="1"/>
</dbReference>
<dbReference type="InterPro" id="IPR007457">
    <property type="entry name" value="Fe_traffick_prot_YggX"/>
</dbReference>
<dbReference type="InterPro" id="IPR036766">
    <property type="entry name" value="Fe_traffick_prot_YggX_sf"/>
</dbReference>
<dbReference type="NCBIfam" id="NF003817">
    <property type="entry name" value="PRK05408.1"/>
    <property type="match status" value="1"/>
</dbReference>
<dbReference type="PANTHER" id="PTHR36965">
    <property type="entry name" value="FE(2+)-TRAFFICKING PROTEIN-RELATED"/>
    <property type="match status" value="1"/>
</dbReference>
<dbReference type="PANTHER" id="PTHR36965:SF1">
    <property type="entry name" value="FE(2+)-TRAFFICKING PROTEIN-RELATED"/>
    <property type="match status" value="1"/>
</dbReference>
<dbReference type="Pfam" id="PF04362">
    <property type="entry name" value="Iron_traffic"/>
    <property type="match status" value="1"/>
</dbReference>
<dbReference type="PIRSF" id="PIRSF029827">
    <property type="entry name" value="Fe_traffic_YggX"/>
    <property type="match status" value="1"/>
</dbReference>
<dbReference type="SUPFAM" id="SSF111148">
    <property type="entry name" value="YggX-like"/>
    <property type="match status" value="1"/>
</dbReference>
<feature type="chain" id="PRO_1000045057" description="Probable Fe(2+)-trafficking protein">
    <location>
        <begin position="1"/>
        <end position="90"/>
    </location>
</feature>
<gene>
    <name type="ordered locus">PST_4098</name>
</gene>
<organism>
    <name type="scientific">Stutzerimonas stutzeri (strain A1501)</name>
    <name type="common">Pseudomonas stutzeri</name>
    <dbReference type="NCBI Taxonomy" id="379731"/>
    <lineage>
        <taxon>Bacteria</taxon>
        <taxon>Pseudomonadati</taxon>
        <taxon>Pseudomonadota</taxon>
        <taxon>Gammaproteobacteria</taxon>
        <taxon>Pseudomonadales</taxon>
        <taxon>Pseudomonadaceae</taxon>
        <taxon>Stutzerimonas</taxon>
    </lineage>
</organism>
<proteinExistence type="inferred from homology"/>
<sequence length="90" mass="10688">MTRTVNCRKYNQELPGLERPPFPGQKGEDIYNNISRQAWDDWQKHQTMLINERRLNMMNAEDRKFLQGEMDKFFSGEDYAKAEGYVPPSE</sequence>
<protein>
    <recommendedName>
        <fullName evidence="1">Probable Fe(2+)-trafficking protein</fullName>
    </recommendedName>
</protein>
<accession>A4VRX0</accession>
<reference key="1">
    <citation type="journal article" date="2008" name="Proc. Natl. Acad. Sci. U.S.A.">
        <title>Nitrogen fixation island and rhizosphere competence traits in the genome of root-associated Pseudomonas stutzeri A1501.</title>
        <authorList>
            <person name="Yan Y."/>
            <person name="Yang J."/>
            <person name="Dou Y."/>
            <person name="Chen M."/>
            <person name="Ping S."/>
            <person name="Peng J."/>
            <person name="Lu W."/>
            <person name="Zhang W."/>
            <person name="Yao Z."/>
            <person name="Li H."/>
            <person name="Liu W."/>
            <person name="He S."/>
            <person name="Geng L."/>
            <person name="Zhang X."/>
            <person name="Yang F."/>
            <person name="Yu H."/>
            <person name="Zhan Y."/>
            <person name="Li D."/>
            <person name="Lin Z."/>
            <person name="Wang Y."/>
            <person name="Elmerich C."/>
            <person name="Lin M."/>
            <person name="Jin Q."/>
        </authorList>
    </citation>
    <scope>NUCLEOTIDE SEQUENCE [LARGE SCALE GENOMIC DNA]</scope>
    <source>
        <strain>A1501</strain>
    </source>
</reference>